<name>RK16_SPIOL</name>
<comment type="function">
    <text evidence="7 8">Component of the chloroplast ribosome (chloro-ribosome), a dedicated translation machinery responsible for the synthesis of chloroplast genome-encoded proteins, including proteins of the transcription and translation machinery and components of the photosynthetic apparatus.</text>
</comment>
<comment type="subunit">
    <text evidence="2 3">Component of the chloroplast large ribosomal subunit (LSU). Mature 70S chloroplast ribosomes of higher plants consist of a small (30S) and a large (50S) subunit. The 30S small subunit contains 1 molecule of ribosomal RNA (16S rRNA) and 24 different proteins. The 50S large subunit contains 3 rRNA molecules (23S, 5S and 4.5S rRNA) and 33 different proteins.</text>
</comment>
<comment type="subcellular location">
    <subcellularLocation>
        <location evidence="2 3">Plastid</location>
        <location evidence="2 3">Chloroplast</location>
    </subcellularLocation>
</comment>
<comment type="PTM">
    <text evidence="7">Partially alpha-N-monomethylated at Met-1 (10%), whereas 90% of it is blocked to Edman degradation, probably by trimethylation.</text>
</comment>
<comment type="mass spectrometry"/>
<comment type="similarity">
    <text evidence="1">Belongs to the universal ribosomal protein uL16 family.</text>
</comment>
<accession>P17353</accession>
<accession>Q9M3J7</accession>
<sequence>MLSPKRTRFRKQHRGRMKGISYRGNRICFGRYALQALEPAWITSRQIEAGRRAMTRNARRGGKIWVRIFPDKPVTVRPAETRMGSGKGSPEYWVAVVKPGRILYEISGVAENIARRAVAIAASKMPIRTQFIISG</sequence>
<gene>
    <name evidence="1" type="primary">rpl16</name>
</gene>
<reference key="1">
    <citation type="journal article" date="1989" name="Mol. Gen. Genet.">
        <title>Cotranscription of the S10- and spc-like operons in spinach chloroplasts and identification of three of their gene products.</title>
        <authorList>
            <person name="Zhou D.X."/>
            <person name="Quigley F."/>
            <person name="Massenet O."/>
            <person name="Mache R."/>
        </authorList>
    </citation>
    <scope>NUCLEOTIDE SEQUENCE [GENOMIC DNA]</scope>
    <source>
        <tissue>Leaf</tissue>
    </source>
</reference>
<reference key="2">
    <citation type="journal article" date="2001" name="Plant Mol. Biol.">
        <title>The plastid chromosome of spinach (Spinacia oleracea): complete nucleotide sequence and gene organization.</title>
        <authorList>
            <person name="Schmitz-Linneweber C."/>
            <person name="Maier R.M."/>
            <person name="Alcaraz J.-P."/>
            <person name="Cottet A."/>
            <person name="Herrmann R.G."/>
            <person name="Mache R."/>
        </authorList>
    </citation>
    <scope>NUCLEOTIDE SEQUENCE [LARGE SCALE GENOMIC DNA]</scope>
    <source>
        <strain>cv. Geant d'hiver</strain>
        <strain>cv. Monatol</strain>
    </source>
</reference>
<reference key="3">
    <citation type="journal article" date="2000" name="J. Biol. Chem.">
        <title>The plastid ribosomal proteins. Identification of all the proteins in the 50S subunit of an organelle ribosome (chloroplast).</title>
        <authorList>
            <person name="Yamaguchi K."/>
            <person name="Subramanian A.R."/>
        </authorList>
    </citation>
    <scope>PROTEIN SEQUENCE OF 1-14</scope>
    <scope>SUBUNIT</scope>
    <scope>SUBCELLULAR LOCATION</scope>
    <scope>MASS SPECTROMETRY</scope>
    <scope>METHYLATION AT MET-1</scope>
    <source>
        <strain>cv. Alwaro</strain>
        <tissue>Leaf</tissue>
    </source>
</reference>
<reference key="4">
    <citation type="journal article" date="2007" name="Proc. Natl. Acad. Sci. U.S.A.">
        <title>Cryo-EM study of the spinach chloroplast ribosome reveals the structural and functional roles of plastid-specific ribosomal proteins.</title>
        <authorList>
            <person name="Sharma M.R."/>
            <person name="Wilson D.N."/>
            <person name="Datta P.P."/>
            <person name="Barat C."/>
            <person name="Schluenzen F."/>
            <person name="Fucini P."/>
            <person name="Agrawal R.K."/>
        </authorList>
    </citation>
    <scope>STRUCTURE BY ELECTRON MICROSCOPY (9.4 ANGSTROMS)</scope>
</reference>
<reference key="5">
    <citation type="journal article" date="2016" name="Sci. Rep.">
        <title>Cryo-EM structure of the large subunit of the spinach chloroplast ribosome.</title>
        <authorList>
            <person name="Ahmed T."/>
            <person name="Yin Z."/>
            <person name="Bhushan S."/>
        </authorList>
    </citation>
    <scope>STRUCTURE BY ELECTRON MICROSCOPY (3.50 ANGSTROMS)</scope>
</reference>
<reference key="6">
    <citation type="journal article" date="2017" name="EMBO J.">
        <title>The complete structure of the chloroplast 70S ribosome in complex with translation factor pY.</title>
        <authorList>
            <person name="Bieri P."/>
            <person name="Leibundgut M."/>
            <person name="Saurer M."/>
            <person name="Boehringer D."/>
            <person name="Ban N."/>
        </authorList>
    </citation>
    <scope>STRUCTURE BY ELECTRON MICROSCOPY (3.25 ANGSTROMS)</scope>
    <scope>SUBUNIT</scope>
    <scope>SUBCELLULAR LOCATION</scope>
</reference>
<dbReference type="EMBL" id="X13336">
    <property type="protein sequence ID" value="CAA31716.1"/>
    <property type="molecule type" value="Genomic_DNA"/>
</dbReference>
<dbReference type="EMBL" id="AJ400848">
    <property type="protein sequence ID" value="CAB88765.1"/>
    <property type="molecule type" value="Genomic_DNA"/>
</dbReference>
<dbReference type="PIR" id="S01979">
    <property type="entry name" value="R5SP16"/>
</dbReference>
<dbReference type="RefSeq" id="NP_054972.1">
    <property type="nucleotide sequence ID" value="NC_002202.1"/>
</dbReference>
<dbReference type="PDB" id="4V61">
    <property type="method" value="EM"/>
    <property type="resolution" value="9.40 A"/>
    <property type="chains" value="BO=1-135"/>
</dbReference>
<dbReference type="PDB" id="5H1S">
    <property type="method" value="EM"/>
    <property type="resolution" value="3.50 A"/>
    <property type="chains" value="O=1-135"/>
</dbReference>
<dbReference type="PDB" id="5MLC">
    <property type="method" value="EM"/>
    <property type="resolution" value="3.90 A"/>
    <property type="chains" value="O=1-135"/>
</dbReference>
<dbReference type="PDB" id="5MMI">
    <property type="method" value="EM"/>
    <property type="resolution" value="3.25 A"/>
    <property type="chains" value="N=1-135"/>
</dbReference>
<dbReference type="PDB" id="5MMM">
    <property type="method" value="EM"/>
    <property type="resolution" value="3.40 A"/>
    <property type="chains" value="N=1-135"/>
</dbReference>
<dbReference type="PDB" id="5X8P">
    <property type="method" value="EM"/>
    <property type="resolution" value="3.40 A"/>
    <property type="chains" value="N=1-135"/>
</dbReference>
<dbReference type="PDB" id="5X8T">
    <property type="method" value="EM"/>
    <property type="resolution" value="3.30 A"/>
    <property type="chains" value="N=1-135"/>
</dbReference>
<dbReference type="PDB" id="6ERI">
    <property type="method" value="EM"/>
    <property type="resolution" value="3.00 A"/>
    <property type="chains" value="AM=1-134"/>
</dbReference>
<dbReference type="PDBsum" id="4V61"/>
<dbReference type="PDBsum" id="5H1S"/>
<dbReference type="PDBsum" id="5MLC"/>
<dbReference type="PDBsum" id="5MMI"/>
<dbReference type="PDBsum" id="5MMM"/>
<dbReference type="PDBsum" id="5X8P"/>
<dbReference type="PDBsum" id="5X8T"/>
<dbReference type="PDBsum" id="6ERI"/>
<dbReference type="EMDB" id="EMD-3525"/>
<dbReference type="EMDB" id="EMD-3531"/>
<dbReference type="EMDB" id="EMD-3533"/>
<dbReference type="EMDB" id="EMD-3941"/>
<dbReference type="EMDB" id="EMD-6709"/>
<dbReference type="EMDB" id="EMD-6711"/>
<dbReference type="EMDB" id="EMD-9572"/>
<dbReference type="SMR" id="P17353"/>
<dbReference type="FunCoup" id="P17353">
    <property type="interactions" value="836"/>
</dbReference>
<dbReference type="IntAct" id="P17353">
    <property type="interactions" value="1"/>
</dbReference>
<dbReference type="STRING" id="3562.P17353"/>
<dbReference type="iPTMnet" id="P17353"/>
<dbReference type="GeneID" id="2715623"/>
<dbReference type="KEGG" id="soe:2715623"/>
<dbReference type="InParanoid" id="P17353"/>
<dbReference type="OrthoDB" id="1850746at2759"/>
<dbReference type="Proteomes" id="UP001155700">
    <property type="component" value="Chloroplast Pltd"/>
</dbReference>
<dbReference type="GO" id="GO:0009507">
    <property type="term" value="C:chloroplast"/>
    <property type="evidence" value="ECO:0007669"/>
    <property type="project" value="UniProtKB-SubCell"/>
</dbReference>
<dbReference type="GO" id="GO:0005762">
    <property type="term" value="C:mitochondrial large ribosomal subunit"/>
    <property type="evidence" value="ECO:0000318"/>
    <property type="project" value="GO_Central"/>
</dbReference>
<dbReference type="GO" id="GO:0019843">
    <property type="term" value="F:rRNA binding"/>
    <property type="evidence" value="ECO:0000318"/>
    <property type="project" value="GO_Central"/>
</dbReference>
<dbReference type="GO" id="GO:0003735">
    <property type="term" value="F:structural constituent of ribosome"/>
    <property type="evidence" value="ECO:0000318"/>
    <property type="project" value="GO_Central"/>
</dbReference>
<dbReference type="GO" id="GO:0032543">
    <property type="term" value="P:mitochondrial translation"/>
    <property type="evidence" value="ECO:0000318"/>
    <property type="project" value="GO_Central"/>
</dbReference>
<dbReference type="CDD" id="cd01433">
    <property type="entry name" value="Ribosomal_L16_L10e"/>
    <property type="match status" value="1"/>
</dbReference>
<dbReference type="FunFam" id="3.90.1170.10:FF:000001">
    <property type="entry name" value="50S ribosomal protein L16"/>
    <property type="match status" value="1"/>
</dbReference>
<dbReference type="Gene3D" id="3.90.1170.10">
    <property type="entry name" value="Ribosomal protein L10e/L16"/>
    <property type="match status" value="1"/>
</dbReference>
<dbReference type="HAMAP" id="MF_01342">
    <property type="entry name" value="Ribosomal_uL16"/>
    <property type="match status" value="1"/>
</dbReference>
<dbReference type="InterPro" id="IPR047873">
    <property type="entry name" value="Ribosomal_uL16"/>
</dbReference>
<dbReference type="InterPro" id="IPR000114">
    <property type="entry name" value="Ribosomal_uL16_bact-type"/>
</dbReference>
<dbReference type="InterPro" id="IPR020798">
    <property type="entry name" value="Ribosomal_uL16_CS"/>
</dbReference>
<dbReference type="InterPro" id="IPR016180">
    <property type="entry name" value="Ribosomal_uL16_dom"/>
</dbReference>
<dbReference type="InterPro" id="IPR036920">
    <property type="entry name" value="Ribosomal_uL16_sf"/>
</dbReference>
<dbReference type="NCBIfam" id="TIGR01164">
    <property type="entry name" value="rplP_bact"/>
    <property type="match status" value="1"/>
</dbReference>
<dbReference type="PANTHER" id="PTHR12220">
    <property type="entry name" value="50S/60S RIBOSOMAL PROTEIN L16"/>
    <property type="match status" value="1"/>
</dbReference>
<dbReference type="PANTHER" id="PTHR12220:SF13">
    <property type="entry name" value="LARGE RIBOSOMAL SUBUNIT PROTEIN UL16M"/>
    <property type="match status" value="1"/>
</dbReference>
<dbReference type="Pfam" id="PF00252">
    <property type="entry name" value="Ribosomal_L16"/>
    <property type="match status" value="1"/>
</dbReference>
<dbReference type="PRINTS" id="PR00060">
    <property type="entry name" value="RIBOSOMALL16"/>
</dbReference>
<dbReference type="SUPFAM" id="SSF54686">
    <property type="entry name" value="Ribosomal protein L16p/L10e"/>
    <property type="match status" value="1"/>
</dbReference>
<dbReference type="PROSITE" id="PS00586">
    <property type="entry name" value="RIBOSOMAL_L16_1"/>
    <property type="match status" value="1"/>
</dbReference>
<dbReference type="PROSITE" id="PS00701">
    <property type="entry name" value="RIBOSOMAL_L16_2"/>
    <property type="match status" value="1"/>
</dbReference>
<geneLocation type="chloroplast"/>
<feature type="chain" id="PRO_0000062315" description="Large ribosomal subunit protein uL16c">
    <location>
        <begin position="1"/>
        <end position="135"/>
    </location>
</feature>
<feature type="modified residue" description="N-methylmethionine" evidence="2">
    <location>
        <position position="1"/>
    </location>
</feature>
<feature type="sequence conflict" description="In Ref. 1; CAA31716." evidence="6" ref="1">
    <original>A</original>
    <variation>G</variation>
    <location>
        <position position="58"/>
    </location>
</feature>
<feature type="sequence conflict" description="In Ref. 1; CAA31716." evidence="6" ref="1">
    <original>A</original>
    <variation>D</variation>
    <location>
        <position position="117"/>
    </location>
</feature>
<feature type="strand" evidence="9">
    <location>
        <begin position="8"/>
        <end position="10"/>
    </location>
</feature>
<feature type="strand" evidence="9">
    <location>
        <begin position="29"/>
        <end position="36"/>
    </location>
</feature>
<feature type="strand" evidence="9">
    <location>
        <begin position="40"/>
        <end position="43"/>
    </location>
</feature>
<feature type="helix" evidence="9">
    <location>
        <begin position="44"/>
        <end position="58"/>
    </location>
</feature>
<feature type="strand" evidence="9">
    <location>
        <begin position="63"/>
        <end position="66"/>
    </location>
</feature>
<feature type="strand" evidence="9">
    <location>
        <begin position="72"/>
        <end position="76"/>
    </location>
</feature>
<feature type="strand" evidence="10">
    <location>
        <begin position="79"/>
        <end position="82"/>
    </location>
</feature>
<feature type="strand" evidence="9">
    <location>
        <begin position="89"/>
        <end position="97"/>
    </location>
</feature>
<feature type="strand" evidence="9">
    <location>
        <begin position="102"/>
        <end position="109"/>
    </location>
</feature>
<feature type="helix" evidence="9">
    <location>
        <begin position="111"/>
        <end position="122"/>
    </location>
</feature>
<feature type="strand" evidence="9">
    <location>
        <begin position="125"/>
        <end position="127"/>
    </location>
</feature>
<feature type="strand" evidence="9">
    <location>
        <begin position="129"/>
        <end position="133"/>
    </location>
</feature>
<protein>
    <recommendedName>
        <fullName evidence="5">Large ribosomal subunit protein uL16c</fullName>
    </recommendedName>
    <alternativeName>
        <fullName evidence="1 4">50S ribosomal protein L16, chloroplastic</fullName>
    </alternativeName>
    <alternativeName>
        <fullName>Ribosomal protein CS-L24</fullName>
    </alternativeName>
</protein>
<evidence type="ECO:0000255" key="1">
    <source>
        <dbReference type="HAMAP-Rule" id="MF_01342"/>
    </source>
</evidence>
<evidence type="ECO:0000269" key="2">
    <source>
    </source>
</evidence>
<evidence type="ECO:0000269" key="3">
    <source>
    </source>
</evidence>
<evidence type="ECO:0000303" key="4">
    <source>
    </source>
</evidence>
<evidence type="ECO:0000303" key="5">
    <source>
    </source>
</evidence>
<evidence type="ECO:0000305" key="6"/>
<evidence type="ECO:0000305" key="7">
    <source>
    </source>
</evidence>
<evidence type="ECO:0000305" key="8">
    <source>
    </source>
</evidence>
<evidence type="ECO:0007829" key="9">
    <source>
        <dbReference type="PDB" id="5MMI"/>
    </source>
</evidence>
<evidence type="ECO:0007829" key="10">
    <source>
        <dbReference type="PDB" id="5X8T"/>
    </source>
</evidence>
<organism>
    <name type="scientific">Spinacia oleracea</name>
    <name type="common">Spinach</name>
    <dbReference type="NCBI Taxonomy" id="3562"/>
    <lineage>
        <taxon>Eukaryota</taxon>
        <taxon>Viridiplantae</taxon>
        <taxon>Streptophyta</taxon>
        <taxon>Embryophyta</taxon>
        <taxon>Tracheophyta</taxon>
        <taxon>Spermatophyta</taxon>
        <taxon>Magnoliopsida</taxon>
        <taxon>eudicotyledons</taxon>
        <taxon>Gunneridae</taxon>
        <taxon>Pentapetalae</taxon>
        <taxon>Caryophyllales</taxon>
        <taxon>Chenopodiaceae</taxon>
        <taxon>Chenopodioideae</taxon>
        <taxon>Anserineae</taxon>
        <taxon>Spinacia</taxon>
    </lineage>
</organism>
<proteinExistence type="evidence at protein level"/>
<keyword id="KW-0002">3D-structure</keyword>
<keyword id="KW-0150">Chloroplast</keyword>
<keyword id="KW-0903">Direct protein sequencing</keyword>
<keyword id="KW-0488">Methylation</keyword>
<keyword id="KW-0934">Plastid</keyword>
<keyword id="KW-1185">Reference proteome</keyword>
<keyword id="KW-0687">Ribonucleoprotein</keyword>
<keyword id="KW-0689">Ribosomal protein</keyword>